<reference key="1">
    <citation type="journal article" date="2010" name="PLoS Genet.">
        <title>Genome sequence of the plant growth promoting endophytic bacterium Enterobacter sp. 638.</title>
        <authorList>
            <person name="Taghavi S."/>
            <person name="van der Lelie D."/>
            <person name="Hoffman A."/>
            <person name="Zhang Y.B."/>
            <person name="Walla M.D."/>
            <person name="Vangronsveld J."/>
            <person name="Newman L."/>
            <person name="Monchy S."/>
        </authorList>
    </citation>
    <scope>NUCLEOTIDE SEQUENCE [LARGE SCALE GENOMIC DNA]</scope>
    <source>
        <strain>638</strain>
    </source>
</reference>
<comment type="function">
    <text evidence="1">Hydrolyzes the pyrophosphate bond of UDP-2,3-diacylglucosamine to yield 2,3-diacylglucosamine 1-phosphate (lipid X) and UMP by catalyzing the attack of water at the alpha-P atom. Involved in the biosynthesis of lipid A, a phosphorylated glycolipid that anchors the lipopolysaccharide to the outer membrane of the cell.</text>
</comment>
<comment type="catalytic activity">
    <reaction evidence="1">
        <text>UDP-2-N,3-O-bis[(3R)-3-hydroxytetradecanoyl]-alpha-D-glucosamine + H2O = 2-N,3-O-bis[(3R)-3-hydroxytetradecanoyl]-alpha-D-glucosaminyl 1-phosphate + UMP + 2 H(+)</text>
        <dbReference type="Rhea" id="RHEA:25213"/>
        <dbReference type="ChEBI" id="CHEBI:15377"/>
        <dbReference type="ChEBI" id="CHEBI:15378"/>
        <dbReference type="ChEBI" id="CHEBI:57865"/>
        <dbReference type="ChEBI" id="CHEBI:57957"/>
        <dbReference type="ChEBI" id="CHEBI:78847"/>
        <dbReference type="EC" id="3.6.1.54"/>
    </reaction>
</comment>
<comment type="cofactor">
    <cofactor evidence="1">
        <name>Mn(2+)</name>
        <dbReference type="ChEBI" id="CHEBI:29035"/>
    </cofactor>
    <text evidence="1">Binds 2 Mn(2+) ions per subunit in a binuclear metal center.</text>
</comment>
<comment type="pathway">
    <text evidence="1">Glycolipid biosynthesis; lipid IV(A) biosynthesis; lipid IV(A) from (3R)-3-hydroxytetradecanoyl-[acyl-carrier-protein] and UDP-N-acetyl-alpha-D-glucosamine: step 4/6.</text>
</comment>
<comment type="subcellular location">
    <subcellularLocation>
        <location evidence="1">Cell inner membrane</location>
        <topology evidence="1">Peripheral membrane protein</topology>
        <orientation evidence="1">Cytoplasmic side</orientation>
    </subcellularLocation>
</comment>
<comment type="similarity">
    <text evidence="1">Belongs to the LpxH family.</text>
</comment>
<keyword id="KW-0997">Cell inner membrane</keyword>
<keyword id="KW-1003">Cell membrane</keyword>
<keyword id="KW-0378">Hydrolase</keyword>
<keyword id="KW-0441">Lipid A biosynthesis</keyword>
<keyword id="KW-0444">Lipid biosynthesis</keyword>
<keyword id="KW-0443">Lipid metabolism</keyword>
<keyword id="KW-0464">Manganese</keyword>
<keyword id="KW-0472">Membrane</keyword>
<keyword id="KW-0479">Metal-binding</keyword>
<dbReference type="EC" id="3.6.1.54" evidence="1"/>
<dbReference type="EMBL" id="CP000653">
    <property type="protein sequence ID" value="ABP59662.1"/>
    <property type="molecule type" value="Genomic_DNA"/>
</dbReference>
<dbReference type="RefSeq" id="WP_012016382.1">
    <property type="nucleotide sequence ID" value="NC_009436.1"/>
</dbReference>
<dbReference type="SMR" id="A4W7I2"/>
<dbReference type="STRING" id="399742.Ent638_0978"/>
<dbReference type="KEGG" id="ent:Ent638_0978"/>
<dbReference type="eggNOG" id="COG2908">
    <property type="taxonomic scope" value="Bacteria"/>
</dbReference>
<dbReference type="HOGENOM" id="CLU_074586_0_0_6"/>
<dbReference type="OrthoDB" id="9783283at2"/>
<dbReference type="UniPathway" id="UPA00359">
    <property type="reaction ID" value="UER00480"/>
</dbReference>
<dbReference type="Proteomes" id="UP000000230">
    <property type="component" value="Chromosome"/>
</dbReference>
<dbReference type="GO" id="GO:0005737">
    <property type="term" value="C:cytoplasm"/>
    <property type="evidence" value="ECO:0007669"/>
    <property type="project" value="InterPro"/>
</dbReference>
<dbReference type="GO" id="GO:0019897">
    <property type="term" value="C:extrinsic component of plasma membrane"/>
    <property type="evidence" value="ECO:0007669"/>
    <property type="project" value="UniProtKB-UniRule"/>
</dbReference>
<dbReference type="GO" id="GO:0030145">
    <property type="term" value="F:manganese ion binding"/>
    <property type="evidence" value="ECO:0007669"/>
    <property type="project" value="UniProtKB-UniRule"/>
</dbReference>
<dbReference type="GO" id="GO:0008758">
    <property type="term" value="F:UDP-2,3-diacylglucosamine hydrolase activity"/>
    <property type="evidence" value="ECO:0007669"/>
    <property type="project" value="UniProtKB-UniRule"/>
</dbReference>
<dbReference type="GO" id="GO:0009245">
    <property type="term" value="P:lipid A biosynthetic process"/>
    <property type="evidence" value="ECO:0007669"/>
    <property type="project" value="UniProtKB-UniRule"/>
</dbReference>
<dbReference type="CDD" id="cd07398">
    <property type="entry name" value="MPP_YbbF-LpxH"/>
    <property type="match status" value="1"/>
</dbReference>
<dbReference type="FunFam" id="3.60.21.10:FF:000012">
    <property type="entry name" value="UDP-2,3-diacylglucosamine hydrolase"/>
    <property type="match status" value="1"/>
</dbReference>
<dbReference type="Gene3D" id="3.60.21.10">
    <property type="match status" value="1"/>
</dbReference>
<dbReference type="HAMAP" id="MF_00575">
    <property type="entry name" value="LpxH"/>
    <property type="match status" value="1"/>
</dbReference>
<dbReference type="InterPro" id="IPR004843">
    <property type="entry name" value="Calcineurin-like_PHP_ApaH"/>
</dbReference>
<dbReference type="InterPro" id="IPR043461">
    <property type="entry name" value="LpxH-like"/>
</dbReference>
<dbReference type="InterPro" id="IPR029052">
    <property type="entry name" value="Metallo-depent_PP-like"/>
</dbReference>
<dbReference type="InterPro" id="IPR010138">
    <property type="entry name" value="UDP-diacylglucosamine_Hdrlase"/>
</dbReference>
<dbReference type="NCBIfam" id="TIGR01854">
    <property type="entry name" value="lipid_A_lpxH"/>
    <property type="match status" value="1"/>
</dbReference>
<dbReference type="NCBIfam" id="NF003743">
    <property type="entry name" value="PRK05340.1"/>
    <property type="match status" value="1"/>
</dbReference>
<dbReference type="PANTHER" id="PTHR34990:SF1">
    <property type="entry name" value="UDP-2,3-DIACYLGLUCOSAMINE HYDROLASE"/>
    <property type="match status" value="1"/>
</dbReference>
<dbReference type="PANTHER" id="PTHR34990">
    <property type="entry name" value="UDP-2,3-DIACYLGLUCOSAMINE HYDROLASE-RELATED"/>
    <property type="match status" value="1"/>
</dbReference>
<dbReference type="Pfam" id="PF00149">
    <property type="entry name" value="Metallophos"/>
    <property type="match status" value="1"/>
</dbReference>
<dbReference type="SUPFAM" id="SSF56300">
    <property type="entry name" value="Metallo-dependent phosphatases"/>
    <property type="match status" value="1"/>
</dbReference>
<evidence type="ECO:0000255" key="1">
    <source>
        <dbReference type="HAMAP-Rule" id="MF_00575"/>
    </source>
</evidence>
<organism>
    <name type="scientific">Enterobacter sp. (strain 638)</name>
    <dbReference type="NCBI Taxonomy" id="399742"/>
    <lineage>
        <taxon>Bacteria</taxon>
        <taxon>Pseudomonadati</taxon>
        <taxon>Pseudomonadota</taxon>
        <taxon>Gammaproteobacteria</taxon>
        <taxon>Enterobacterales</taxon>
        <taxon>Enterobacteriaceae</taxon>
        <taxon>Enterobacter</taxon>
    </lineage>
</organism>
<sequence>MATLFIADLHLQTEEPAITAGFLHFLQGEARSADALYILGDLFEAWIGDDDPNPLHHDMAAAIKALVDSGVPCYFIHGNRDFLIGKRFARESGMTLLPDENVLELYGRNVLIMHGDTLCTDDTGYLAFRAKVHTPWIQTLFLALPLFIRNRIAAKMRAGSKAANSSKSMTIMDVNPQAVVEVMEKHRVQWLIHGHTHRPDVHQLTANGEPAHRVVLGAWHSEGSMVKVTSEGVELIQFPF</sequence>
<gene>
    <name evidence="1" type="primary">lpxH</name>
    <name type="ordered locus">Ent638_0978</name>
</gene>
<accession>A4W7I2</accession>
<protein>
    <recommendedName>
        <fullName evidence="1">UDP-2,3-diacylglucosamine hydrolase</fullName>
        <ecNumber evidence="1">3.6.1.54</ecNumber>
    </recommendedName>
    <alternativeName>
        <fullName evidence="1">UDP-2,3-diacylglucosamine diphosphatase</fullName>
    </alternativeName>
</protein>
<proteinExistence type="inferred from homology"/>
<feature type="chain" id="PRO_1000061174" description="UDP-2,3-diacylglucosamine hydrolase">
    <location>
        <begin position="1"/>
        <end position="240"/>
    </location>
</feature>
<feature type="binding site" evidence="1">
    <location>
        <position position="8"/>
    </location>
    <ligand>
        <name>Mn(2+)</name>
        <dbReference type="ChEBI" id="CHEBI:29035"/>
        <label>1</label>
    </ligand>
</feature>
<feature type="binding site" evidence="1">
    <location>
        <position position="10"/>
    </location>
    <ligand>
        <name>Mn(2+)</name>
        <dbReference type="ChEBI" id="CHEBI:29035"/>
        <label>1</label>
    </ligand>
</feature>
<feature type="binding site" evidence="1">
    <location>
        <position position="41"/>
    </location>
    <ligand>
        <name>Mn(2+)</name>
        <dbReference type="ChEBI" id="CHEBI:29035"/>
        <label>1</label>
    </ligand>
</feature>
<feature type="binding site" evidence="1">
    <location>
        <position position="41"/>
    </location>
    <ligand>
        <name>Mn(2+)</name>
        <dbReference type="ChEBI" id="CHEBI:29035"/>
        <label>2</label>
    </ligand>
</feature>
<feature type="binding site" evidence="1">
    <location>
        <begin position="79"/>
        <end position="80"/>
    </location>
    <ligand>
        <name>substrate</name>
    </ligand>
</feature>
<feature type="binding site" evidence="1">
    <location>
        <position position="79"/>
    </location>
    <ligand>
        <name>Mn(2+)</name>
        <dbReference type="ChEBI" id="CHEBI:29035"/>
        <label>2</label>
    </ligand>
</feature>
<feature type="binding site" evidence="1">
    <location>
        <position position="114"/>
    </location>
    <ligand>
        <name>Mn(2+)</name>
        <dbReference type="ChEBI" id="CHEBI:29035"/>
        <label>2</label>
    </ligand>
</feature>
<feature type="binding site" evidence="1">
    <location>
        <position position="122"/>
    </location>
    <ligand>
        <name>substrate</name>
    </ligand>
</feature>
<feature type="binding site" evidence="1">
    <location>
        <position position="160"/>
    </location>
    <ligand>
        <name>substrate</name>
    </ligand>
</feature>
<feature type="binding site" evidence="1">
    <location>
        <position position="164"/>
    </location>
    <ligand>
        <name>substrate</name>
    </ligand>
</feature>
<feature type="binding site" evidence="1">
    <location>
        <position position="167"/>
    </location>
    <ligand>
        <name>substrate</name>
    </ligand>
</feature>
<feature type="binding site" evidence="1">
    <location>
        <position position="195"/>
    </location>
    <ligand>
        <name>Mn(2+)</name>
        <dbReference type="ChEBI" id="CHEBI:29035"/>
        <label>2</label>
    </ligand>
</feature>
<feature type="binding site" evidence="1">
    <location>
        <position position="195"/>
    </location>
    <ligand>
        <name>substrate</name>
    </ligand>
</feature>
<feature type="binding site" evidence="1">
    <location>
        <position position="197"/>
    </location>
    <ligand>
        <name>Mn(2+)</name>
        <dbReference type="ChEBI" id="CHEBI:29035"/>
        <label>1</label>
    </ligand>
</feature>
<name>LPXH_ENT38</name>